<comment type="function">
    <text evidence="1">Key component of the proton channel; it plays a direct role in the translocation of protons across the membrane.</text>
</comment>
<comment type="subunit">
    <text evidence="1">F-type ATPases have 2 components, CF(1) - the catalytic core - and CF(0) - the membrane proton channel. CF(1) has five subunits: alpha(3), beta(3), gamma(1), delta(1), epsilon(1). CF(0) has three main subunits: a(1), b(2) and c(9-12). The alpha and beta chains form an alternating ring which encloses part of the gamma chain. CF(1) is attached to CF(0) by a central stalk formed by the gamma and epsilon chains, while a peripheral stalk is formed by the delta and b chains.</text>
</comment>
<comment type="subcellular location">
    <subcellularLocation>
        <location evidence="1">Cell inner membrane</location>
        <topology evidence="1">Multi-pass membrane protein</topology>
    </subcellularLocation>
</comment>
<comment type="similarity">
    <text evidence="1">Belongs to the ATPase A chain family.</text>
</comment>
<gene>
    <name evidence="1" type="primary">atpB</name>
    <name type="ordered locus">HH_1497</name>
</gene>
<dbReference type="EMBL" id="AE017125">
    <property type="protein sequence ID" value="AAP78094.1"/>
    <property type="molecule type" value="Genomic_DNA"/>
</dbReference>
<dbReference type="RefSeq" id="WP_011116337.1">
    <property type="nucleotide sequence ID" value="NC_004917.1"/>
</dbReference>
<dbReference type="SMR" id="Q7VG27"/>
<dbReference type="STRING" id="235279.HH_1497"/>
<dbReference type="KEGG" id="hhe:HH_1497"/>
<dbReference type="eggNOG" id="COG0356">
    <property type="taxonomic scope" value="Bacteria"/>
</dbReference>
<dbReference type="HOGENOM" id="CLU_041018_2_2_7"/>
<dbReference type="OrthoDB" id="9789241at2"/>
<dbReference type="Proteomes" id="UP000002495">
    <property type="component" value="Chromosome"/>
</dbReference>
<dbReference type="GO" id="GO:0005886">
    <property type="term" value="C:plasma membrane"/>
    <property type="evidence" value="ECO:0007669"/>
    <property type="project" value="UniProtKB-SubCell"/>
</dbReference>
<dbReference type="GO" id="GO:0045259">
    <property type="term" value="C:proton-transporting ATP synthase complex"/>
    <property type="evidence" value="ECO:0007669"/>
    <property type="project" value="UniProtKB-KW"/>
</dbReference>
<dbReference type="GO" id="GO:0046933">
    <property type="term" value="F:proton-transporting ATP synthase activity, rotational mechanism"/>
    <property type="evidence" value="ECO:0007669"/>
    <property type="project" value="UniProtKB-UniRule"/>
</dbReference>
<dbReference type="GO" id="GO:0042777">
    <property type="term" value="P:proton motive force-driven plasma membrane ATP synthesis"/>
    <property type="evidence" value="ECO:0007669"/>
    <property type="project" value="TreeGrafter"/>
</dbReference>
<dbReference type="CDD" id="cd00310">
    <property type="entry name" value="ATP-synt_Fo_a_6"/>
    <property type="match status" value="1"/>
</dbReference>
<dbReference type="FunFam" id="1.20.120.220:FF:000006">
    <property type="entry name" value="ATP synthase subunit a"/>
    <property type="match status" value="1"/>
</dbReference>
<dbReference type="Gene3D" id="1.20.120.220">
    <property type="entry name" value="ATP synthase, F0 complex, subunit A"/>
    <property type="match status" value="1"/>
</dbReference>
<dbReference type="HAMAP" id="MF_01393">
    <property type="entry name" value="ATP_synth_a_bact"/>
    <property type="match status" value="1"/>
</dbReference>
<dbReference type="InterPro" id="IPR045082">
    <property type="entry name" value="ATP_syn_F0_a_bact/chloroplast"/>
</dbReference>
<dbReference type="InterPro" id="IPR000568">
    <property type="entry name" value="ATP_synth_F0_asu"/>
</dbReference>
<dbReference type="InterPro" id="IPR023011">
    <property type="entry name" value="ATP_synth_F0_asu_AS"/>
</dbReference>
<dbReference type="InterPro" id="IPR035908">
    <property type="entry name" value="F0_ATP_A_sf"/>
</dbReference>
<dbReference type="NCBIfam" id="TIGR01131">
    <property type="entry name" value="ATP_synt_6_or_A"/>
    <property type="match status" value="1"/>
</dbReference>
<dbReference type="NCBIfam" id="NF004481">
    <property type="entry name" value="PRK05815.2-3"/>
    <property type="match status" value="1"/>
</dbReference>
<dbReference type="PANTHER" id="PTHR42823">
    <property type="entry name" value="ATP SYNTHASE SUBUNIT A, CHLOROPLASTIC"/>
    <property type="match status" value="1"/>
</dbReference>
<dbReference type="PANTHER" id="PTHR42823:SF3">
    <property type="entry name" value="ATP SYNTHASE SUBUNIT A, CHLOROPLASTIC"/>
    <property type="match status" value="1"/>
</dbReference>
<dbReference type="Pfam" id="PF00119">
    <property type="entry name" value="ATP-synt_A"/>
    <property type="match status" value="1"/>
</dbReference>
<dbReference type="PRINTS" id="PR00123">
    <property type="entry name" value="ATPASEA"/>
</dbReference>
<dbReference type="SUPFAM" id="SSF81336">
    <property type="entry name" value="F1F0 ATP synthase subunit A"/>
    <property type="match status" value="1"/>
</dbReference>
<dbReference type="PROSITE" id="PS00449">
    <property type="entry name" value="ATPASE_A"/>
    <property type="match status" value="1"/>
</dbReference>
<evidence type="ECO:0000255" key="1">
    <source>
        <dbReference type="HAMAP-Rule" id="MF_01393"/>
    </source>
</evidence>
<feature type="chain" id="PRO_0000362329" description="ATP synthase subunit a">
    <location>
        <begin position="1"/>
        <end position="226"/>
    </location>
</feature>
<feature type="transmembrane region" description="Helical" evidence="1">
    <location>
        <begin position="18"/>
        <end position="38"/>
    </location>
</feature>
<feature type="transmembrane region" description="Helical" evidence="1">
    <location>
        <begin position="44"/>
        <end position="64"/>
    </location>
</feature>
<feature type="transmembrane region" description="Helical" evidence="1">
    <location>
        <begin position="79"/>
        <end position="99"/>
    </location>
</feature>
<feature type="transmembrane region" description="Helical" evidence="1">
    <location>
        <begin position="105"/>
        <end position="125"/>
    </location>
</feature>
<feature type="transmembrane region" description="Helical" evidence="1">
    <location>
        <begin position="137"/>
        <end position="157"/>
    </location>
</feature>
<feature type="transmembrane region" description="Helical" evidence="1">
    <location>
        <begin position="177"/>
        <end position="197"/>
    </location>
</feature>
<feature type="transmembrane region" description="Helical" evidence="1">
    <location>
        <begin position="202"/>
        <end position="222"/>
    </location>
</feature>
<sequence>MDERLFTFAGLINPNHDFIIGFHTLLVAVILLILARYATHKMQVVPSGIQNVFEFIISGIISFAKDIVGEQVARKYFPLAATIAFLVFFGNAIGIIPGFEAPTSSWSFTLVLALVVFFYYHFEGIRAQGVLKYFKHFMGPVWWLAPLMFPVEIISHFSRIISLSFRLFGNIKGDDMFLLVMLMLAPWIVPVAPFAILTFMALLQAFVFMILTYVYIHGAVVVDEEH</sequence>
<proteinExistence type="inferred from homology"/>
<organism>
    <name type="scientific">Helicobacter hepaticus (strain ATCC 51449 / 3B1)</name>
    <dbReference type="NCBI Taxonomy" id="235279"/>
    <lineage>
        <taxon>Bacteria</taxon>
        <taxon>Pseudomonadati</taxon>
        <taxon>Campylobacterota</taxon>
        <taxon>Epsilonproteobacteria</taxon>
        <taxon>Campylobacterales</taxon>
        <taxon>Helicobacteraceae</taxon>
        <taxon>Helicobacter</taxon>
    </lineage>
</organism>
<keyword id="KW-0066">ATP synthesis</keyword>
<keyword id="KW-0997">Cell inner membrane</keyword>
<keyword id="KW-1003">Cell membrane</keyword>
<keyword id="KW-0138">CF(0)</keyword>
<keyword id="KW-0375">Hydrogen ion transport</keyword>
<keyword id="KW-0406">Ion transport</keyword>
<keyword id="KW-0472">Membrane</keyword>
<keyword id="KW-1185">Reference proteome</keyword>
<keyword id="KW-0812">Transmembrane</keyword>
<keyword id="KW-1133">Transmembrane helix</keyword>
<keyword id="KW-0813">Transport</keyword>
<protein>
    <recommendedName>
        <fullName evidence="1">ATP synthase subunit a</fullName>
    </recommendedName>
    <alternativeName>
        <fullName evidence="1">ATP synthase F0 sector subunit a</fullName>
    </alternativeName>
    <alternativeName>
        <fullName evidence="1">F-ATPase subunit 6</fullName>
    </alternativeName>
</protein>
<reference key="1">
    <citation type="journal article" date="2003" name="Proc. Natl. Acad. Sci. U.S.A.">
        <title>The complete genome sequence of the carcinogenic bacterium Helicobacter hepaticus.</title>
        <authorList>
            <person name="Suerbaum S."/>
            <person name="Josenhans C."/>
            <person name="Sterzenbach T."/>
            <person name="Drescher B."/>
            <person name="Brandt P."/>
            <person name="Bell M."/>
            <person name="Droege M."/>
            <person name="Fartmann B."/>
            <person name="Fischer H.-P."/>
            <person name="Ge Z."/>
            <person name="Hoerster A."/>
            <person name="Holland R."/>
            <person name="Klein K."/>
            <person name="Koenig J."/>
            <person name="Macko L."/>
            <person name="Mendz G.L."/>
            <person name="Nyakatura G."/>
            <person name="Schauer D.B."/>
            <person name="Shen Z."/>
            <person name="Weber J."/>
            <person name="Frosch M."/>
            <person name="Fox J.G."/>
        </authorList>
    </citation>
    <scope>NUCLEOTIDE SEQUENCE [LARGE SCALE GENOMIC DNA]</scope>
    <source>
        <strain>ATCC 51449 / 3B1</strain>
    </source>
</reference>
<name>ATP6_HELHP</name>
<accession>Q7VG27</accession>